<organism>
    <name type="scientific">Shigella flexneri serotype 5b (strain 8401)</name>
    <dbReference type="NCBI Taxonomy" id="373384"/>
    <lineage>
        <taxon>Bacteria</taxon>
        <taxon>Pseudomonadati</taxon>
        <taxon>Pseudomonadota</taxon>
        <taxon>Gammaproteobacteria</taxon>
        <taxon>Enterobacterales</taxon>
        <taxon>Enterobacteriaceae</taxon>
        <taxon>Shigella</taxon>
    </lineage>
</organism>
<gene>
    <name evidence="1" type="primary">kefC</name>
    <name type="ordered locus">SFV_0041</name>
</gene>
<proteinExistence type="inferred from homology"/>
<accession>Q0T8E8</accession>
<protein>
    <recommendedName>
        <fullName evidence="1">Glutathione-regulated potassium-efflux system protein KefC</fullName>
    </recommendedName>
    <alternativeName>
        <fullName evidence="1">K(+)/H(+) antiporter</fullName>
    </alternativeName>
</protein>
<evidence type="ECO:0000255" key="1">
    <source>
        <dbReference type="HAMAP-Rule" id="MF_01413"/>
    </source>
</evidence>
<evidence type="ECO:0000255" key="2">
    <source>
        <dbReference type="PROSITE-ProRule" id="PRU00543"/>
    </source>
</evidence>
<evidence type="ECO:0000256" key="3">
    <source>
        <dbReference type="SAM" id="MobiDB-lite"/>
    </source>
</evidence>
<keyword id="KW-0050">Antiport</keyword>
<keyword id="KW-0997">Cell inner membrane</keyword>
<keyword id="KW-1003">Cell membrane</keyword>
<keyword id="KW-0406">Ion transport</keyword>
<keyword id="KW-0472">Membrane</keyword>
<keyword id="KW-0630">Potassium</keyword>
<keyword id="KW-0633">Potassium transport</keyword>
<keyword id="KW-0812">Transmembrane</keyword>
<keyword id="KW-1133">Transmembrane helix</keyword>
<keyword id="KW-0813">Transport</keyword>
<sequence length="620" mass="67738">MDSHTLVQALIYLGSAALIVPIAVRLGLGSVLGYLIAGCIIGLWGLRLVTDAESILHFAEIGVVLMLFIIGLELDPQRLWKLRAAVFGGGALQMVICGGLLGLFCMLLGLRWQVAELIGMTLALSSTAIAMQAMNERNLMVTQMGRSAFAVLLFQDIAAILLVAMIPLLAASSASTTMGAFALSALKVAGALVLVVLLGRYVTRPALRFVARSGLREVFSAVALFLVFGFGLLLEEVGLSMAMGAFLAGVLLASSEYRHALESDIEPFKGLLLGLFFIGVGMSIDFGTLIENPLRIVILLLGFLIIKIAMLWLIARPLQVPNKQRRWFAVLLGQGSEFAFVVFGAAQMANVLEPEWAKSLTLAVALSMAATPILLVILNRLEQSSTEEAREADEIDEEQPRVIIAGFGRFGQITGRLLLSSGVKMVVLDHDPDHIETLRKFGMKVFYGDATRMDLLESAGAAKAEVLINAIDDPQTNLQLTEMVKEHFPHLQIIARARDVDHYIRLRQAGVEKPERETFEGALKTGRLALESLGLGPYEARERADVFRRFNIQMVEEMAMVENDTKARAAVYKRTSAMLSEIITEDREHLSLIQRHGWQGTEEGKHTGNMADEPETKPSS</sequence>
<comment type="function">
    <text evidence="1">Pore-forming subunit of a potassium efflux system that confers protection against electrophiles. Catalyzes K(+)/H(+) antiport.</text>
</comment>
<comment type="subunit">
    <text evidence="1">Homodimer. Interacts with the regulatory subunit KefF.</text>
</comment>
<comment type="subcellular location">
    <subcellularLocation>
        <location evidence="1">Cell inner membrane</location>
        <topology evidence="1">Multi-pass membrane protein</topology>
    </subcellularLocation>
</comment>
<comment type="similarity">
    <text evidence="1">Belongs to the monovalent cation:proton antiporter 2 (CPA2) transporter (TC 2.A.37) family. KefC subfamily.</text>
</comment>
<feature type="chain" id="PRO_1000087398" description="Glutathione-regulated potassium-efflux system protein KefC">
    <location>
        <begin position="1"/>
        <end position="620"/>
    </location>
</feature>
<feature type="transmembrane region" description="Helical" evidence="1">
    <location>
        <begin position="4"/>
        <end position="24"/>
    </location>
</feature>
<feature type="transmembrane region" description="Helical" evidence="1">
    <location>
        <begin position="26"/>
        <end position="46"/>
    </location>
</feature>
<feature type="transmembrane region" description="Helical" evidence="1">
    <location>
        <begin position="54"/>
        <end position="74"/>
    </location>
</feature>
<feature type="transmembrane region" description="Helical" evidence="1">
    <location>
        <begin position="90"/>
        <end position="110"/>
    </location>
</feature>
<feature type="transmembrane region" description="Helical" evidence="1">
    <location>
        <begin position="114"/>
        <end position="134"/>
    </location>
</feature>
<feature type="transmembrane region" description="Helical" evidence="1">
    <location>
        <begin position="149"/>
        <end position="169"/>
    </location>
</feature>
<feature type="transmembrane region" description="Helical" evidence="1">
    <location>
        <begin position="178"/>
        <end position="198"/>
    </location>
</feature>
<feature type="transmembrane region" description="Helical" evidence="1">
    <location>
        <begin position="218"/>
        <end position="238"/>
    </location>
</feature>
<feature type="transmembrane region" description="Helical" evidence="1">
    <location>
        <begin position="270"/>
        <end position="290"/>
    </location>
</feature>
<feature type="transmembrane region" description="Helical" evidence="1">
    <location>
        <begin position="294"/>
        <end position="314"/>
    </location>
</feature>
<feature type="transmembrane region" description="Helical" evidence="1">
    <location>
        <begin position="327"/>
        <end position="347"/>
    </location>
</feature>
<feature type="transmembrane region" description="Helical" evidence="1">
    <location>
        <begin position="359"/>
        <end position="379"/>
    </location>
</feature>
<feature type="domain" description="RCK N-terminal" evidence="2">
    <location>
        <begin position="399"/>
        <end position="518"/>
    </location>
</feature>
<feature type="region of interest" description="Disordered" evidence="3">
    <location>
        <begin position="597"/>
        <end position="620"/>
    </location>
</feature>
<name>KEFC_SHIF8</name>
<reference key="1">
    <citation type="journal article" date="2006" name="BMC Genomics">
        <title>Complete genome sequence of Shigella flexneri 5b and comparison with Shigella flexneri 2a.</title>
        <authorList>
            <person name="Nie H."/>
            <person name="Yang F."/>
            <person name="Zhang X."/>
            <person name="Yang J."/>
            <person name="Chen L."/>
            <person name="Wang J."/>
            <person name="Xiong Z."/>
            <person name="Peng J."/>
            <person name="Sun L."/>
            <person name="Dong J."/>
            <person name="Xue Y."/>
            <person name="Xu X."/>
            <person name="Chen S."/>
            <person name="Yao Z."/>
            <person name="Shen Y."/>
            <person name="Jin Q."/>
        </authorList>
    </citation>
    <scope>NUCLEOTIDE SEQUENCE [LARGE SCALE GENOMIC DNA]</scope>
    <source>
        <strain>8401</strain>
    </source>
</reference>
<dbReference type="EMBL" id="CP000266">
    <property type="protein sequence ID" value="ABF02328.1"/>
    <property type="molecule type" value="Genomic_DNA"/>
</dbReference>
<dbReference type="RefSeq" id="WP_000377180.1">
    <property type="nucleotide sequence ID" value="NC_008258.1"/>
</dbReference>
<dbReference type="SMR" id="Q0T8E8"/>
<dbReference type="KEGG" id="sfv:SFV_0041"/>
<dbReference type="HOGENOM" id="CLU_005126_9_3_6"/>
<dbReference type="Proteomes" id="UP000000659">
    <property type="component" value="Chromosome"/>
</dbReference>
<dbReference type="GO" id="GO:0005886">
    <property type="term" value="C:plasma membrane"/>
    <property type="evidence" value="ECO:0007669"/>
    <property type="project" value="UniProtKB-SubCell"/>
</dbReference>
<dbReference type="GO" id="GO:0019899">
    <property type="term" value="F:enzyme binding"/>
    <property type="evidence" value="ECO:0007669"/>
    <property type="project" value="InterPro"/>
</dbReference>
<dbReference type="GO" id="GO:0015503">
    <property type="term" value="F:glutathione-regulated potassium exporter activity"/>
    <property type="evidence" value="ECO:0007669"/>
    <property type="project" value="UniProtKB-UniRule"/>
</dbReference>
<dbReference type="GO" id="GO:0015643">
    <property type="term" value="F:toxic substance binding"/>
    <property type="evidence" value="ECO:0007669"/>
    <property type="project" value="InterPro"/>
</dbReference>
<dbReference type="GO" id="GO:1902600">
    <property type="term" value="P:proton transmembrane transport"/>
    <property type="evidence" value="ECO:0007669"/>
    <property type="project" value="InterPro"/>
</dbReference>
<dbReference type="GO" id="GO:0051595">
    <property type="term" value="P:response to methylglyoxal"/>
    <property type="evidence" value="ECO:0007669"/>
    <property type="project" value="InterPro"/>
</dbReference>
<dbReference type="FunFam" id="1.20.1530.20:FF:000001">
    <property type="entry name" value="Glutathione-regulated potassium-efflux system protein KefB"/>
    <property type="match status" value="1"/>
</dbReference>
<dbReference type="FunFam" id="3.40.50.720:FF:000036">
    <property type="entry name" value="Glutathione-regulated potassium-efflux system protein KefB"/>
    <property type="match status" value="1"/>
</dbReference>
<dbReference type="Gene3D" id="1.20.1530.20">
    <property type="match status" value="1"/>
</dbReference>
<dbReference type="Gene3D" id="3.40.50.720">
    <property type="entry name" value="NAD(P)-binding Rossmann-like Domain"/>
    <property type="match status" value="1"/>
</dbReference>
<dbReference type="HAMAP" id="MF_01413">
    <property type="entry name" value="K_H_efflux_KefC"/>
    <property type="match status" value="1"/>
</dbReference>
<dbReference type="InterPro" id="IPR006153">
    <property type="entry name" value="Cation/H_exchanger_TM"/>
</dbReference>
<dbReference type="InterPro" id="IPR004771">
    <property type="entry name" value="K/H_exchanger"/>
</dbReference>
<dbReference type="InterPro" id="IPR023941">
    <property type="entry name" value="K_H_efflux_KefC"/>
</dbReference>
<dbReference type="InterPro" id="IPR006036">
    <property type="entry name" value="K_uptake_TrkA"/>
</dbReference>
<dbReference type="InterPro" id="IPR038770">
    <property type="entry name" value="Na+/solute_symporter_sf"/>
</dbReference>
<dbReference type="InterPro" id="IPR036291">
    <property type="entry name" value="NAD(P)-bd_dom_sf"/>
</dbReference>
<dbReference type="InterPro" id="IPR003148">
    <property type="entry name" value="RCK_N"/>
</dbReference>
<dbReference type="NCBIfam" id="TIGR00932">
    <property type="entry name" value="2a37"/>
    <property type="match status" value="1"/>
</dbReference>
<dbReference type="NCBIfam" id="NF002924">
    <property type="entry name" value="PRK03562.1"/>
    <property type="match status" value="1"/>
</dbReference>
<dbReference type="PANTHER" id="PTHR46157:SF3">
    <property type="entry name" value="GLUTATHIONE-REGULATED POTASSIUM-EFFLUX SYSTEM PROTEIN KEFC"/>
    <property type="match status" value="1"/>
</dbReference>
<dbReference type="PANTHER" id="PTHR46157">
    <property type="entry name" value="K(+) EFFLUX ANTIPORTER 3, CHLOROPLASTIC"/>
    <property type="match status" value="1"/>
</dbReference>
<dbReference type="Pfam" id="PF00999">
    <property type="entry name" value="Na_H_Exchanger"/>
    <property type="match status" value="1"/>
</dbReference>
<dbReference type="Pfam" id="PF02254">
    <property type="entry name" value="TrkA_N"/>
    <property type="match status" value="1"/>
</dbReference>
<dbReference type="PRINTS" id="PR00335">
    <property type="entry name" value="KUPTAKETRKA"/>
</dbReference>
<dbReference type="SUPFAM" id="SSF51735">
    <property type="entry name" value="NAD(P)-binding Rossmann-fold domains"/>
    <property type="match status" value="1"/>
</dbReference>
<dbReference type="PROSITE" id="PS51201">
    <property type="entry name" value="RCK_N"/>
    <property type="match status" value="1"/>
</dbReference>